<name>Y1105_ARATH</name>
<comment type="catalytic activity">
    <reaction>
        <text>L-seryl-[protein] + ATP = O-phospho-L-seryl-[protein] + ADP + H(+)</text>
        <dbReference type="Rhea" id="RHEA:17989"/>
        <dbReference type="Rhea" id="RHEA-COMP:9863"/>
        <dbReference type="Rhea" id="RHEA-COMP:11604"/>
        <dbReference type="ChEBI" id="CHEBI:15378"/>
        <dbReference type="ChEBI" id="CHEBI:29999"/>
        <dbReference type="ChEBI" id="CHEBI:30616"/>
        <dbReference type="ChEBI" id="CHEBI:83421"/>
        <dbReference type="ChEBI" id="CHEBI:456216"/>
        <dbReference type="EC" id="2.7.11.1"/>
    </reaction>
</comment>
<comment type="catalytic activity">
    <reaction>
        <text>L-threonyl-[protein] + ATP = O-phospho-L-threonyl-[protein] + ADP + H(+)</text>
        <dbReference type="Rhea" id="RHEA:46608"/>
        <dbReference type="Rhea" id="RHEA-COMP:11060"/>
        <dbReference type="Rhea" id="RHEA-COMP:11605"/>
        <dbReference type="ChEBI" id="CHEBI:15378"/>
        <dbReference type="ChEBI" id="CHEBI:30013"/>
        <dbReference type="ChEBI" id="CHEBI:30616"/>
        <dbReference type="ChEBI" id="CHEBI:61977"/>
        <dbReference type="ChEBI" id="CHEBI:456216"/>
        <dbReference type="EC" id="2.7.11.1"/>
    </reaction>
</comment>
<comment type="subcellular location">
    <subcellularLocation>
        <location evidence="4">Membrane</location>
        <topology evidence="4">Single-pass type I membrane protein</topology>
    </subcellularLocation>
</comment>
<comment type="similarity">
    <text evidence="2">Belongs to the protein kinase superfamily. Ser/Thr protein kinase family.</text>
</comment>
<comment type="sequence caution" evidence="4">
    <conflict type="erroneous initiation">
        <sequence resource="EMBL-CDS" id="BAD94000"/>
    </conflict>
</comment>
<reference key="1">
    <citation type="journal article" date="2000" name="Nature">
        <title>Sequence and analysis of chromosome 1 of the plant Arabidopsis thaliana.</title>
        <authorList>
            <person name="Theologis A."/>
            <person name="Ecker J.R."/>
            <person name="Palm C.J."/>
            <person name="Federspiel N.A."/>
            <person name="Kaul S."/>
            <person name="White O."/>
            <person name="Alonso J."/>
            <person name="Altafi H."/>
            <person name="Araujo R."/>
            <person name="Bowman C.L."/>
            <person name="Brooks S.Y."/>
            <person name="Buehler E."/>
            <person name="Chan A."/>
            <person name="Chao Q."/>
            <person name="Chen H."/>
            <person name="Cheuk R.F."/>
            <person name="Chin C.W."/>
            <person name="Chung M.K."/>
            <person name="Conn L."/>
            <person name="Conway A.B."/>
            <person name="Conway A.R."/>
            <person name="Creasy T.H."/>
            <person name="Dewar K."/>
            <person name="Dunn P."/>
            <person name="Etgu P."/>
            <person name="Feldblyum T.V."/>
            <person name="Feng J.-D."/>
            <person name="Fong B."/>
            <person name="Fujii C.Y."/>
            <person name="Gill J.E."/>
            <person name="Goldsmith A.D."/>
            <person name="Haas B."/>
            <person name="Hansen N.F."/>
            <person name="Hughes B."/>
            <person name="Huizar L."/>
            <person name="Hunter J.L."/>
            <person name="Jenkins J."/>
            <person name="Johnson-Hopson C."/>
            <person name="Khan S."/>
            <person name="Khaykin E."/>
            <person name="Kim C.J."/>
            <person name="Koo H.L."/>
            <person name="Kremenetskaia I."/>
            <person name="Kurtz D.B."/>
            <person name="Kwan A."/>
            <person name="Lam B."/>
            <person name="Langin-Hooper S."/>
            <person name="Lee A."/>
            <person name="Lee J.M."/>
            <person name="Lenz C.A."/>
            <person name="Li J.H."/>
            <person name="Li Y.-P."/>
            <person name="Lin X."/>
            <person name="Liu S.X."/>
            <person name="Liu Z.A."/>
            <person name="Luros J.S."/>
            <person name="Maiti R."/>
            <person name="Marziali A."/>
            <person name="Militscher J."/>
            <person name="Miranda M."/>
            <person name="Nguyen M."/>
            <person name="Nierman W.C."/>
            <person name="Osborne B.I."/>
            <person name="Pai G."/>
            <person name="Peterson J."/>
            <person name="Pham P.K."/>
            <person name="Rizzo M."/>
            <person name="Rooney T."/>
            <person name="Rowley D."/>
            <person name="Sakano H."/>
            <person name="Salzberg S.L."/>
            <person name="Schwartz J.R."/>
            <person name="Shinn P."/>
            <person name="Southwick A.M."/>
            <person name="Sun H."/>
            <person name="Tallon L.J."/>
            <person name="Tambunga G."/>
            <person name="Toriumi M.J."/>
            <person name="Town C.D."/>
            <person name="Utterback T."/>
            <person name="Van Aken S."/>
            <person name="Vaysberg M."/>
            <person name="Vysotskaia V.S."/>
            <person name="Walker M."/>
            <person name="Wu D."/>
            <person name="Yu G."/>
            <person name="Fraser C.M."/>
            <person name="Venter J.C."/>
            <person name="Davis R.W."/>
        </authorList>
    </citation>
    <scope>NUCLEOTIDE SEQUENCE [LARGE SCALE GENOMIC DNA]</scope>
    <source>
        <strain>cv. Columbia</strain>
    </source>
</reference>
<reference key="2">
    <citation type="journal article" date="2017" name="Plant J.">
        <title>Araport11: a complete reannotation of the Arabidopsis thaliana reference genome.</title>
        <authorList>
            <person name="Cheng C.Y."/>
            <person name="Krishnakumar V."/>
            <person name="Chan A.P."/>
            <person name="Thibaud-Nissen F."/>
            <person name="Schobel S."/>
            <person name="Town C.D."/>
        </authorList>
    </citation>
    <scope>GENOME REANNOTATION</scope>
    <source>
        <strain>cv. Columbia</strain>
    </source>
</reference>
<reference key="3">
    <citation type="journal article" date="2003" name="Science">
        <title>Empirical analysis of transcriptional activity in the Arabidopsis genome.</title>
        <authorList>
            <person name="Yamada K."/>
            <person name="Lim J."/>
            <person name="Dale J.M."/>
            <person name="Chen H."/>
            <person name="Shinn P."/>
            <person name="Palm C.J."/>
            <person name="Southwick A.M."/>
            <person name="Wu H.C."/>
            <person name="Kim C.J."/>
            <person name="Nguyen M."/>
            <person name="Pham P.K."/>
            <person name="Cheuk R.F."/>
            <person name="Karlin-Newmann G."/>
            <person name="Liu S.X."/>
            <person name="Lam B."/>
            <person name="Sakano H."/>
            <person name="Wu T."/>
            <person name="Yu G."/>
            <person name="Miranda M."/>
            <person name="Quach H.L."/>
            <person name="Tripp M."/>
            <person name="Chang C.H."/>
            <person name="Lee J.M."/>
            <person name="Toriumi M.J."/>
            <person name="Chan M.M."/>
            <person name="Tang C.C."/>
            <person name="Onodera C.S."/>
            <person name="Deng J.M."/>
            <person name="Akiyama K."/>
            <person name="Ansari Y."/>
            <person name="Arakawa T."/>
            <person name="Banh J."/>
            <person name="Banno F."/>
            <person name="Bowser L."/>
            <person name="Brooks S.Y."/>
            <person name="Carninci P."/>
            <person name="Chao Q."/>
            <person name="Choy N."/>
            <person name="Enju A."/>
            <person name="Goldsmith A.D."/>
            <person name="Gurjal M."/>
            <person name="Hansen N.F."/>
            <person name="Hayashizaki Y."/>
            <person name="Johnson-Hopson C."/>
            <person name="Hsuan V.W."/>
            <person name="Iida K."/>
            <person name="Karnes M."/>
            <person name="Khan S."/>
            <person name="Koesema E."/>
            <person name="Ishida J."/>
            <person name="Jiang P.X."/>
            <person name="Jones T."/>
            <person name="Kawai J."/>
            <person name="Kamiya A."/>
            <person name="Meyers C."/>
            <person name="Nakajima M."/>
            <person name="Narusaka M."/>
            <person name="Seki M."/>
            <person name="Sakurai T."/>
            <person name="Satou M."/>
            <person name="Tamse R."/>
            <person name="Vaysberg M."/>
            <person name="Wallender E.K."/>
            <person name="Wong C."/>
            <person name="Yamamura Y."/>
            <person name="Yuan S."/>
            <person name="Shinozaki K."/>
            <person name="Davis R.W."/>
            <person name="Theologis A."/>
            <person name="Ecker J.R."/>
        </authorList>
    </citation>
    <scope>NUCLEOTIDE SEQUENCE [LARGE SCALE MRNA]</scope>
    <source>
        <strain>cv. Columbia</strain>
    </source>
</reference>
<reference key="4">
    <citation type="submission" date="2005-03" db="EMBL/GenBank/DDBJ databases">
        <title>Large-scale analysis of RIKEN Arabidopsis full-length (RAFL) cDNAs.</title>
        <authorList>
            <person name="Totoki Y."/>
            <person name="Seki M."/>
            <person name="Ishida J."/>
            <person name="Nakajima M."/>
            <person name="Enju A."/>
            <person name="Kamiya A."/>
            <person name="Narusaka M."/>
            <person name="Shin-i T."/>
            <person name="Nakagawa M."/>
            <person name="Sakamoto N."/>
            <person name="Oishi K."/>
            <person name="Kohara Y."/>
            <person name="Kobayashi M."/>
            <person name="Toyoda A."/>
            <person name="Sakaki Y."/>
            <person name="Sakurai T."/>
            <person name="Iida K."/>
            <person name="Akiyama K."/>
            <person name="Satou M."/>
            <person name="Toyoda T."/>
            <person name="Konagaya A."/>
            <person name="Carninci P."/>
            <person name="Kawai J."/>
            <person name="Hayashizaki Y."/>
            <person name="Shinozaki K."/>
        </authorList>
    </citation>
    <scope>NUCLEOTIDE SEQUENCE [LARGE SCALE MRNA] OF 389-625</scope>
    <source>
        <strain>cv. Columbia</strain>
    </source>
</reference>
<accession>O04086</accession>
<accession>Q56YN4</accession>
<accession>Q8LPJ9</accession>
<gene>
    <name type="ordered locus">At1g11050</name>
    <name type="ORF">T19D16.6</name>
</gene>
<protein>
    <recommendedName>
        <fullName>Probable receptor-like protein kinase At1g11050</fullName>
        <ecNumber>2.7.11.1</ecNumber>
    </recommendedName>
</protein>
<dbReference type="EC" id="2.7.11.1"/>
<dbReference type="EMBL" id="U95973">
    <property type="protein sequence ID" value="AAB65477.1"/>
    <property type="molecule type" value="Genomic_DNA"/>
</dbReference>
<dbReference type="EMBL" id="CP002684">
    <property type="protein sequence ID" value="AEE28677.1"/>
    <property type="molecule type" value="Genomic_DNA"/>
</dbReference>
<dbReference type="EMBL" id="AY099669">
    <property type="protein sequence ID" value="AAM20520.1"/>
    <property type="molecule type" value="mRNA"/>
</dbReference>
<dbReference type="EMBL" id="BT003413">
    <property type="protein sequence ID" value="AAO30076.1"/>
    <property type="molecule type" value="mRNA"/>
</dbReference>
<dbReference type="EMBL" id="AK221287">
    <property type="protein sequence ID" value="BAD94000.1"/>
    <property type="status" value="ALT_INIT"/>
    <property type="molecule type" value="mRNA"/>
</dbReference>
<dbReference type="PIR" id="D86244">
    <property type="entry name" value="D86244"/>
</dbReference>
<dbReference type="RefSeq" id="NP_172572.1">
    <property type="nucleotide sequence ID" value="NM_100978.2"/>
</dbReference>
<dbReference type="SMR" id="O04086"/>
<dbReference type="BioGRID" id="22886">
    <property type="interactions" value="5"/>
</dbReference>
<dbReference type="FunCoup" id="O04086">
    <property type="interactions" value="106"/>
</dbReference>
<dbReference type="IntAct" id="O04086">
    <property type="interactions" value="5"/>
</dbReference>
<dbReference type="STRING" id="3702.O04086"/>
<dbReference type="GlyGen" id="O04086">
    <property type="glycosylation" value="4 sites"/>
</dbReference>
<dbReference type="iPTMnet" id="O04086"/>
<dbReference type="PaxDb" id="3702-AT1G11050.1"/>
<dbReference type="ProteomicsDB" id="242497"/>
<dbReference type="EnsemblPlants" id="AT1G11050.1">
    <property type="protein sequence ID" value="AT1G11050.1"/>
    <property type="gene ID" value="AT1G11050"/>
</dbReference>
<dbReference type="GeneID" id="837646"/>
<dbReference type="Gramene" id="AT1G11050.1">
    <property type="protein sequence ID" value="AT1G11050.1"/>
    <property type="gene ID" value="AT1G11050"/>
</dbReference>
<dbReference type="KEGG" id="ath:AT1G11050"/>
<dbReference type="Araport" id="AT1G11050"/>
<dbReference type="TAIR" id="AT1G11050"/>
<dbReference type="eggNOG" id="KOG1187">
    <property type="taxonomic scope" value="Eukaryota"/>
</dbReference>
<dbReference type="HOGENOM" id="CLU_000288_0_0_1"/>
<dbReference type="InParanoid" id="O04086"/>
<dbReference type="OMA" id="QNCCVSL"/>
<dbReference type="OrthoDB" id="122279at2759"/>
<dbReference type="PhylomeDB" id="O04086"/>
<dbReference type="PRO" id="PR:O04086"/>
<dbReference type="Proteomes" id="UP000006548">
    <property type="component" value="Chromosome 1"/>
</dbReference>
<dbReference type="ExpressionAtlas" id="O04086">
    <property type="expression patterns" value="baseline and differential"/>
</dbReference>
<dbReference type="GO" id="GO:0016020">
    <property type="term" value="C:membrane"/>
    <property type="evidence" value="ECO:0007669"/>
    <property type="project" value="UniProtKB-SubCell"/>
</dbReference>
<dbReference type="GO" id="GO:0005524">
    <property type="term" value="F:ATP binding"/>
    <property type="evidence" value="ECO:0007669"/>
    <property type="project" value="UniProtKB-KW"/>
</dbReference>
<dbReference type="GO" id="GO:0106310">
    <property type="term" value="F:protein serine kinase activity"/>
    <property type="evidence" value="ECO:0007669"/>
    <property type="project" value="RHEA"/>
</dbReference>
<dbReference type="GO" id="GO:0004674">
    <property type="term" value="F:protein serine/threonine kinase activity"/>
    <property type="evidence" value="ECO:0007669"/>
    <property type="project" value="UniProtKB-KW"/>
</dbReference>
<dbReference type="CDD" id="cd14066">
    <property type="entry name" value="STKc_IRAK"/>
    <property type="match status" value="1"/>
</dbReference>
<dbReference type="FunFam" id="1.10.510.10:FF:000287">
    <property type="entry name" value="probable LRR receptor-like serine/threonine-protein kinase RKF3"/>
    <property type="match status" value="1"/>
</dbReference>
<dbReference type="FunFam" id="3.30.200.20:FF:000492">
    <property type="entry name" value="probable receptor-like protein kinase At1g11050"/>
    <property type="match status" value="1"/>
</dbReference>
<dbReference type="Gene3D" id="3.30.200.20">
    <property type="entry name" value="Phosphorylase Kinase, domain 1"/>
    <property type="match status" value="1"/>
</dbReference>
<dbReference type="Gene3D" id="1.10.510.10">
    <property type="entry name" value="Transferase(Phosphotransferase) domain 1"/>
    <property type="match status" value="1"/>
</dbReference>
<dbReference type="InterPro" id="IPR011009">
    <property type="entry name" value="Kinase-like_dom_sf"/>
</dbReference>
<dbReference type="InterPro" id="IPR000719">
    <property type="entry name" value="Prot_kinase_dom"/>
</dbReference>
<dbReference type="InterPro" id="IPR017441">
    <property type="entry name" value="Protein_kinase_ATP_BS"/>
</dbReference>
<dbReference type="InterPro" id="IPR008271">
    <property type="entry name" value="Ser/Thr_kinase_AS"/>
</dbReference>
<dbReference type="InterPro" id="IPR043891">
    <property type="entry name" value="SPARK"/>
</dbReference>
<dbReference type="PANTHER" id="PTHR47989">
    <property type="entry name" value="OS01G0750732 PROTEIN"/>
    <property type="match status" value="1"/>
</dbReference>
<dbReference type="PANTHER" id="PTHR47989:SF58">
    <property type="entry name" value="PROTEIN KINASE DOMAIN-CONTAINING PROTEIN"/>
    <property type="match status" value="1"/>
</dbReference>
<dbReference type="Pfam" id="PF00069">
    <property type="entry name" value="Pkinase"/>
    <property type="match status" value="1"/>
</dbReference>
<dbReference type="Pfam" id="PF19160">
    <property type="entry name" value="SPARK"/>
    <property type="match status" value="1"/>
</dbReference>
<dbReference type="SMART" id="SM00220">
    <property type="entry name" value="S_TKc"/>
    <property type="match status" value="1"/>
</dbReference>
<dbReference type="SUPFAM" id="SSF56112">
    <property type="entry name" value="Protein kinase-like (PK-like)"/>
    <property type="match status" value="1"/>
</dbReference>
<dbReference type="PROSITE" id="PS00107">
    <property type="entry name" value="PROTEIN_KINASE_ATP"/>
    <property type="match status" value="1"/>
</dbReference>
<dbReference type="PROSITE" id="PS50011">
    <property type="entry name" value="PROTEIN_KINASE_DOM"/>
    <property type="match status" value="1"/>
</dbReference>
<dbReference type="PROSITE" id="PS00108">
    <property type="entry name" value="PROTEIN_KINASE_ST"/>
    <property type="match status" value="1"/>
</dbReference>
<feature type="signal peptide" evidence="1">
    <location>
        <begin position="1"/>
        <end position="20"/>
    </location>
</feature>
<feature type="chain" id="PRO_0000389468" description="Probable receptor-like protein kinase At1g11050">
    <location>
        <begin position="21"/>
        <end position="625"/>
    </location>
</feature>
<feature type="topological domain" description="Extracellular" evidence="1">
    <location>
        <begin position="21"/>
        <end position="227"/>
    </location>
</feature>
<feature type="transmembrane region" description="Helical" evidence="1">
    <location>
        <begin position="228"/>
        <end position="248"/>
    </location>
</feature>
<feature type="topological domain" description="Cytoplasmic" evidence="1">
    <location>
        <begin position="249"/>
        <end position="625"/>
    </location>
</feature>
<feature type="domain" description="Protein kinase" evidence="2">
    <location>
        <begin position="295"/>
        <end position="555"/>
    </location>
</feature>
<feature type="active site" description="Proton acceptor" evidence="2 3">
    <location>
        <position position="426"/>
    </location>
</feature>
<feature type="binding site" evidence="2">
    <location>
        <begin position="301"/>
        <end position="309"/>
    </location>
    <ligand>
        <name>ATP</name>
        <dbReference type="ChEBI" id="CHEBI:30616"/>
    </ligand>
</feature>
<feature type="binding site" evidence="2">
    <location>
        <position position="323"/>
    </location>
    <ligand>
        <name>ATP</name>
        <dbReference type="ChEBI" id="CHEBI:30616"/>
    </ligand>
</feature>
<feature type="glycosylation site" description="N-linked (GlcNAc...) asparagine" evidence="1">
    <location>
        <position position="40"/>
    </location>
</feature>
<feature type="glycosylation site" description="N-linked (GlcNAc...) asparagine" evidence="1">
    <location>
        <position position="106"/>
    </location>
</feature>
<feature type="glycosylation site" description="N-linked (GlcNAc...) asparagine" evidence="1">
    <location>
        <position position="121"/>
    </location>
</feature>
<feature type="glycosylation site" description="N-linked (GlcNAc...) asparagine" evidence="1">
    <location>
        <position position="177"/>
    </location>
</feature>
<feature type="sequence conflict" description="In Ref. 4; BAD94000." evidence="4" ref="4">
    <original>H</original>
    <variation>R</variation>
    <location>
        <position position="424"/>
    </location>
</feature>
<feature type="sequence conflict" description="In Ref. 3; AAM20520/AAO30076." evidence="4" ref="3">
    <original>A</original>
    <variation>V</variation>
    <location>
        <position position="567"/>
    </location>
</feature>
<sequence>MPNSILFLLLSFLYLTNCVAQSPSQTCPLDFSHVLTIPWNTTDCQKSDKSADSKNSCCQSLLTLIGIPLAHRLKQTSNFRLPNLATSISCLNNLQTKLSSLSLSSNLTSLCFDPNQFVINNETCAGIQTTQDWVSRLGPSTALDSACSSGLTDLTRCDACVAAGFRVQKQLITLDGNSSHGVYCYHFVVTYAAGIVNKKGPESDDALSCLFSLSLRSPLNSKKKRHTVALALGITGAIFGALVIAGLICLYFRFGKAVKGGEVGWEDQGSRPKWRPNTGSIWFKIEELEKATNNFSQKNFIGRGGFGFVYKGVLPDGSVIAVKKVIESEFQGDAEFRNEVEIISNLKHRNLVPLRGCSMVDDDSESQRYLVYDYMSNGNLDDHLFPRGETTKMPLSWPQRKSIILDVAKGLAYLHYGVKPAIYHRDIKGTNILLDVDMRARVADFGLAKQSREGESHLTTRVAGTHGYLAPEYALYGQLTEKSDVYSFGVVILEIMCGRKALDLSTSGSPNTFLITDWAWSLVKAGKTEEALEQSLLREEGSGLSNPKGIMERFLQVGILCAHVLVALRPTILDALKMLEGDIEVPPIPDRPVPLAHPSYRMDGNGFTISPALSGLQIHSGDMLR</sequence>
<organism>
    <name type="scientific">Arabidopsis thaliana</name>
    <name type="common">Mouse-ear cress</name>
    <dbReference type="NCBI Taxonomy" id="3702"/>
    <lineage>
        <taxon>Eukaryota</taxon>
        <taxon>Viridiplantae</taxon>
        <taxon>Streptophyta</taxon>
        <taxon>Embryophyta</taxon>
        <taxon>Tracheophyta</taxon>
        <taxon>Spermatophyta</taxon>
        <taxon>Magnoliopsida</taxon>
        <taxon>eudicotyledons</taxon>
        <taxon>Gunneridae</taxon>
        <taxon>Pentapetalae</taxon>
        <taxon>rosids</taxon>
        <taxon>malvids</taxon>
        <taxon>Brassicales</taxon>
        <taxon>Brassicaceae</taxon>
        <taxon>Camelineae</taxon>
        <taxon>Arabidopsis</taxon>
    </lineage>
</organism>
<proteinExistence type="evidence at transcript level"/>
<evidence type="ECO:0000255" key="1"/>
<evidence type="ECO:0000255" key="2">
    <source>
        <dbReference type="PROSITE-ProRule" id="PRU00159"/>
    </source>
</evidence>
<evidence type="ECO:0000255" key="3">
    <source>
        <dbReference type="PROSITE-ProRule" id="PRU10027"/>
    </source>
</evidence>
<evidence type="ECO:0000305" key="4"/>
<keyword id="KW-0067">ATP-binding</keyword>
<keyword id="KW-0325">Glycoprotein</keyword>
<keyword id="KW-0418">Kinase</keyword>
<keyword id="KW-0472">Membrane</keyword>
<keyword id="KW-0547">Nucleotide-binding</keyword>
<keyword id="KW-0675">Receptor</keyword>
<keyword id="KW-1185">Reference proteome</keyword>
<keyword id="KW-0723">Serine/threonine-protein kinase</keyword>
<keyword id="KW-0732">Signal</keyword>
<keyword id="KW-0808">Transferase</keyword>
<keyword id="KW-0812">Transmembrane</keyword>
<keyword id="KW-1133">Transmembrane helix</keyword>